<comment type="function">
    <text evidence="1">One of the early assembly proteins it binds 23S rRNA. One of the proteins that surrounds the polypeptide exit tunnel on the outside of the ribosome. Forms the main docking site for trigger factor binding to the ribosome.</text>
</comment>
<comment type="subunit">
    <text evidence="1">Part of the 50S ribosomal subunit. Contacts protein L29, and trigger factor when it is bound to the ribosome.</text>
</comment>
<comment type="similarity">
    <text evidence="1">Belongs to the universal ribosomal protein uL23 family.</text>
</comment>
<feature type="chain" id="PRO_1000068154" description="Large ribosomal subunit protein uL23">
    <location>
        <begin position="1"/>
        <end position="99"/>
    </location>
</feature>
<keyword id="KW-1185">Reference proteome</keyword>
<keyword id="KW-0687">Ribonucleoprotein</keyword>
<keyword id="KW-0689">Ribosomal protein</keyword>
<keyword id="KW-0694">RNA-binding</keyword>
<keyword id="KW-0699">rRNA-binding</keyword>
<dbReference type="EMBL" id="AM420293">
    <property type="protein sequence ID" value="CAM05998.1"/>
    <property type="molecule type" value="Genomic_DNA"/>
</dbReference>
<dbReference type="RefSeq" id="WP_009948629.1">
    <property type="nucleotide sequence ID" value="NC_009142.1"/>
</dbReference>
<dbReference type="SMR" id="A4FPM3"/>
<dbReference type="STRING" id="405948.SACE_6834"/>
<dbReference type="KEGG" id="sen:SACE_6834"/>
<dbReference type="eggNOG" id="COG0089">
    <property type="taxonomic scope" value="Bacteria"/>
</dbReference>
<dbReference type="HOGENOM" id="CLU_037562_3_2_11"/>
<dbReference type="OrthoDB" id="9793353at2"/>
<dbReference type="Proteomes" id="UP000006728">
    <property type="component" value="Chromosome"/>
</dbReference>
<dbReference type="GO" id="GO:1990904">
    <property type="term" value="C:ribonucleoprotein complex"/>
    <property type="evidence" value="ECO:0007669"/>
    <property type="project" value="UniProtKB-KW"/>
</dbReference>
<dbReference type="GO" id="GO:0005840">
    <property type="term" value="C:ribosome"/>
    <property type="evidence" value="ECO:0007669"/>
    <property type="project" value="UniProtKB-KW"/>
</dbReference>
<dbReference type="GO" id="GO:0019843">
    <property type="term" value="F:rRNA binding"/>
    <property type="evidence" value="ECO:0007669"/>
    <property type="project" value="UniProtKB-UniRule"/>
</dbReference>
<dbReference type="GO" id="GO:0003735">
    <property type="term" value="F:structural constituent of ribosome"/>
    <property type="evidence" value="ECO:0007669"/>
    <property type="project" value="InterPro"/>
</dbReference>
<dbReference type="GO" id="GO:0006412">
    <property type="term" value="P:translation"/>
    <property type="evidence" value="ECO:0007669"/>
    <property type="project" value="UniProtKB-UniRule"/>
</dbReference>
<dbReference type="FunFam" id="3.30.70.330:FF:000001">
    <property type="entry name" value="50S ribosomal protein L23"/>
    <property type="match status" value="1"/>
</dbReference>
<dbReference type="Gene3D" id="3.30.70.330">
    <property type="match status" value="1"/>
</dbReference>
<dbReference type="HAMAP" id="MF_01369_B">
    <property type="entry name" value="Ribosomal_uL23_B"/>
    <property type="match status" value="1"/>
</dbReference>
<dbReference type="InterPro" id="IPR012677">
    <property type="entry name" value="Nucleotide-bd_a/b_plait_sf"/>
</dbReference>
<dbReference type="InterPro" id="IPR013025">
    <property type="entry name" value="Ribosomal_uL23-like"/>
</dbReference>
<dbReference type="InterPro" id="IPR012678">
    <property type="entry name" value="Ribosomal_uL23/eL15/eS24_sf"/>
</dbReference>
<dbReference type="InterPro" id="IPR001014">
    <property type="entry name" value="Ribosomal_uL23_CS"/>
</dbReference>
<dbReference type="NCBIfam" id="NF004363">
    <property type="entry name" value="PRK05738.2-4"/>
    <property type="match status" value="1"/>
</dbReference>
<dbReference type="NCBIfam" id="NF004364">
    <property type="entry name" value="PRK05738.2-5"/>
    <property type="match status" value="1"/>
</dbReference>
<dbReference type="PANTHER" id="PTHR11620">
    <property type="entry name" value="60S RIBOSOMAL PROTEIN L23A"/>
    <property type="match status" value="1"/>
</dbReference>
<dbReference type="Pfam" id="PF00276">
    <property type="entry name" value="Ribosomal_L23"/>
    <property type="match status" value="1"/>
</dbReference>
<dbReference type="SUPFAM" id="SSF54189">
    <property type="entry name" value="Ribosomal proteins S24e, L23 and L15e"/>
    <property type="match status" value="1"/>
</dbReference>
<dbReference type="PROSITE" id="PS00050">
    <property type="entry name" value="RIBOSOMAL_L23"/>
    <property type="match status" value="1"/>
</dbReference>
<organism>
    <name type="scientific">Saccharopolyspora erythraea (strain ATCC 11635 / DSM 40517 / JCM 4748 / NBRC 13426 / NCIMB 8594 / NRRL 2338)</name>
    <dbReference type="NCBI Taxonomy" id="405948"/>
    <lineage>
        <taxon>Bacteria</taxon>
        <taxon>Bacillati</taxon>
        <taxon>Actinomycetota</taxon>
        <taxon>Actinomycetes</taxon>
        <taxon>Pseudonocardiales</taxon>
        <taxon>Pseudonocardiaceae</taxon>
        <taxon>Saccharopolyspora</taxon>
    </lineage>
</organism>
<proteinExistence type="inferred from homology"/>
<protein>
    <recommendedName>
        <fullName evidence="1">Large ribosomal subunit protein uL23</fullName>
    </recommendedName>
    <alternativeName>
        <fullName evidence="2">50S ribosomal protein L23</fullName>
    </alternativeName>
</protein>
<accession>A4FPM3</accession>
<reference key="1">
    <citation type="journal article" date="2007" name="Nat. Biotechnol.">
        <title>Complete genome sequence of the erythromycin-producing bacterium Saccharopolyspora erythraea NRRL23338.</title>
        <authorList>
            <person name="Oliynyk M."/>
            <person name="Samborskyy M."/>
            <person name="Lester J.B."/>
            <person name="Mironenko T."/>
            <person name="Scott N."/>
            <person name="Dickens S."/>
            <person name="Haydock S.F."/>
            <person name="Leadlay P.F."/>
        </authorList>
    </citation>
    <scope>NUCLEOTIDE SEQUENCE [LARGE SCALE GENOMIC DNA]</scope>
    <source>
        <strain>ATCC 11635 / DSM 40517 / JCM 4748 / NBRC 13426 / NCIMB 8594 / NRRL 2338</strain>
    </source>
</reference>
<gene>
    <name evidence="1" type="primary">rplW</name>
    <name type="ordered locus">SACE_6834</name>
</gene>
<name>RL23_SACEN</name>
<sequence>MIPDPRDIILAPVISEKSYGLLEENQYTFLVRPGSNKTEIKIAVEKIFGVKVTNVNTINRQGKRKRTRTGYGKRKDTKRAIVTLSPESKPIEIFGGPAA</sequence>
<evidence type="ECO:0000255" key="1">
    <source>
        <dbReference type="HAMAP-Rule" id="MF_01369"/>
    </source>
</evidence>
<evidence type="ECO:0000305" key="2"/>